<protein>
    <recommendedName>
        <fullName evidence="1">NADPH-dependent 7-cyano-7-deazaguanine reductase</fullName>
        <ecNumber evidence="1">1.7.1.13</ecNumber>
    </recommendedName>
    <alternativeName>
        <fullName evidence="1">7-cyano-7-carbaguanine reductase</fullName>
    </alternativeName>
    <alternativeName>
        <fullName evidence="1">NADPH-dependent nitrile oxidoreductase</fullName>
    </alternativeName>
    <alternativeName>
        <fullName evidence="1">PreQ(0) reductase</fullName>
    </alternativeName>
</protein>
<comment type="function">
    <text evidence="1">Catalyzes the NADPH-dependent reduction of 7-cyano-7-deazaguanine (preQ0) to 7-aminomethyl-7-deazaguanine (preQ1).</text>
</comment>
<comment type="catalytic activity">
    <reaction evidence="1">
        <text>7-aminomethyl-7-carbaguanine + 2 NADP(+) = 7-cyano-7-deazaguanine + 2 NADPH + 3 H(+)</text>
        <dbReference type="Rhea" id="RHEA:13409"/>
        <dbReference type="ChEBI" id="CHEBI:15378"/>
        <dbReference type="ChEBI" id="CHEBI:45075"/>
        <dbReference type="ChEBI" id="CHEBI:57783"/>
        <dbReference type="ChEBI" id="CHEBI:58349"/>
        <dbReference type="ChEBI" id="CHEBI:58703"/>
        <dbReference type="EC" id="1.7.1.13"/>
    </reaction>
</comment>
<comment type="pathway">
    <text evidence="1">tRNA modification; tRNA-queuosine biosynthesis.</text>
</comment>
<comment type="subcellular location">
    <subcellularLocation>
        <location evidence="1">Cytoplasm</location>
    </subcellularLocation>
</comment>
<comment type="similarity">
    <text evidence="1">Belongs to the GTP cyclohydrolase I family. QueF type 1 subfamily.</text>
</comment>
<organism>
    <name type="scientific">Agrobacterium fabrum (strain C58 / ATCC 33970)</name>
    <name type="common">Agrobacterium tumefaciens (strain C58)</name>
    <dbReference type="NCBI Taxonomy" id="176299"/>
    <lineage>
        <taxon>Bacteria</taxon>
        <taxon>Pseudomonadati</taxon>
        <taxon>Pseudomonadota</taxon>
        <taxon>Alphaproteobacteria</taxon>
        <taxon>Hyphomicrobiales</taxon>
        <taxon>Rhizobiaceae</taxon>
        <taxon>Rhizobium/Agrobacterium group</taxon>
        <taxon>Agrobacterium</taxon>
        <taxon>Agrobacterium tumefaciens complex</taxon>
    </lineage>
</organism>
<reference key="1">
    <citation type="journal article" date="2001" name="Science">
        <title>The genome of the natural genetic engineer Agrobacterium tumefaciens C58.</title>
        <authorList>
            <person name="Wood D.W."/>
            <person name="Setubal J.C."/>
            <person name="Kaul R."/>
            <person name="Monks D.E."/>
            <person name="Kitajima J.P."/>
            <person name="Okura V.K."/>
            <person name="Zhou Y."/>
            <person name="Chen L."/>
            <person name="Wood G.E."/>
            <person name="Almeida N.F. Jr."/>
            <person name="Woo L."/>
            <person name="Chen Y."/>
            <person name="Paulsen I.T."/>
            <person name="Eisen J.A."/>
            <person name="Karp P.D."/>
            <person name="Bovee D. Sr."/>
            <person name="Chapman P."/>
            <person name="Clendenning J."/>
            <person name="Deatherage G."/>
            <person name="Gillet W."/>
            <person name="Grant C."/>
            <person name="Kutyavin T."/>
            <person name="Levy R."/>
            <person name="Li M.-J."/>
            <person name="McClelland E."/>
            <person name="Palmieri A."/>
            <person name="Raymond C."/>
            <person name="Rouse G."/>
            <person name="Saenphimmachak C."/>
            <person name="Wu Z."/>
            <person name="Romero P."/>
            <person name="Gordon D."/>
            <person name="Zhang S."/>
            <person name="Yoo H."/>
            <person name="Tao Y."/>
            <person name="Biddle P."/>
            <person name="Jung M."/>
            <person name="Krespan W."/>
            <person name="Perry M."/>
            <person name="Gordon-Kamm B."/>
            <person name="Liao L."/>
            <person name="Kim S."/>
            <person name="Hendrick C."/>
            <person name="Zhao Z.-Y."/>
            <person name="Dolan M."/>
            <person name="Chumley F."/>
            <person name="Tingey S.V."/>
            <person name="Tomb J.-F."/>
            <person name="Gordon M.P."/>
            <person name="Olson M.V."/>
            <person name="Nester E.W."/>
        </authorList>
    </citation>
    <scope>NUCLEOTIDE SEQUENCE [LARGE SCALE GENOMIC DNA]</scope>
    <source>
        <strain>C58 / ATCC 33970</strain>
    </source>
</reference>
<reference key="2">
    <citation type="journal article" date="2001" name="Science">
        <title>Genome sequence of the plant pathogen and biotechnology agent Agrobacterium tumefaciens C58.</title>
        <authorList>
            <person name="Goodner B."/>
            <person name="Hinkle G."/>
            <person name="Gattung S."/>
            <person name="Miller N."/>
            <person name="Blanchard M."/>
            <person name="Qurollo B."/>
            <person name="Goldman B.S."/>
            <person name="Cao Y."/>
            <person name="Askenazi M."/>
            <person name="Halling C."/>
            <person name="Mullin L."/>
            <person name="Houmiel K."/>
            <person name="Gordon J."/>
            <person name="Vaudin M."/>
            <person name="Iartchouk O."/>
            <person name="Epp A."/>
            <person name="Liu F."/>
            <person name="Wollam C."/>
            <person name="Allinger M."/>
            <person name="Doughty D."/>
            <person name="Scott C."/>
            <person name="Lappas C."/>
            <person name="Markelz B."/>
            <person name="Flanagan C."/>
            <person name="Crowell C."/>
            <person name="Gurson J."/>
            <person name="Lomo C."/>
            <person name="Sear C."/>
            <person name="Strub G."/>
            <person name="Cielo C."/>
            <person name="Slater S."/>
        </authorList>
    </citation>
    <scope>NUCLEOTIDE SEQUENCE [LARGE SCALE GENOMIC DNA]</scope>
    <source>
        <strain>C58 / ATCC 33970</strain>
    </source>
</reference>
<accession>Q8UD54</accession>
<accession>Q7CXG8</accession>
<sequence length="154" mass="17042">MSVTDVSGLSQLGTKVDTPESPEKAVLEKVPNGNAGTDYVVRFTAPEFTSLCPMTGQPDFAHIVIDYIPGDFLVESKSLKLFLQSFRNHGAFHEDCSVYIAKRLVELLQPKWLRIGAYWYPRGGIPIDVFWQTGAAPEGVWLPDQGVAPYRGRG</sequence>
<keyword id="KW-0963">Cytoplasm</keyword>
<keyword id="KW-0521">NADP</keyword>
<keyword id="KW-0560">Oxidoreductase</keyword>
<keyword id="KW-0671">Queuosine biosynthesis</keyword>
<keyword id="KW-1185">Reference proteome</keyword>
<gene>
    <name evidence="1" type="primary">queF</name>
    <name type="ordered locus">Atu2273</name>
    <name type="ORF">AGR_C_4128</name>
</gene>
<name>QUEF_AGRFC</name>
<evidence type="ECO:0000255" key="1">
    <source>
        <dbReference type="HAMAP-Rule" id="MF_00818"/>
    </source>
</evidence>
<evidence type="ECO:0000256" key="2">
    <source>
        <dbReference type="SAM" id="MobiDB-lite"/>
    </source>
</evidence>
<proteinExistence type="inferred from homology"/>
<dbReference type="EC" id="1.7.1.13" evidence="1"/>
<dbReference type="EMBL" id="AE007869">
    <property type="protein sequence ID" value="AAK88014.2"/>
    <property type="molecule type" value="Genomic_DNA"/>
</dbReference>
<dbReference type="PIR" id="AH2855">
    <property type="entry name" value="AH2855"/>
</dbReference>
<dbReference type="PIR" id="E97632">
    <property type="entry name" value="E97632"/>
</dbReference>
<dbReference type="RefSeq" id="NP_355229.2">
    <property type="nucleotide sequence ID" value="NC_003062.2"/>
</dbReference>
<dbReference type="RefSeq" id="WP_010972191.1">
    <property type="nucleotide sequence ID" value="NC_003062.2"/>
</dbReference>
<dbReference type="SMR" id="Q8UD54"/>
<dbReference type="STRING" id="176299.Atu2273"/>
<dbReference type="EnsemblBacteria" id="AAK88014">
    <property type="protein sequence ID" value="AAK88014"/>
    <property type="gene ID" value="Atu2273"/>
</dbReference>
<dbReference type="GeneID" id="1134311"/>
<dbReference type="KEGG" id="atu:Atu2273"/>
<dbReference type="PATRIC" id="fig|176299.10.peg.2284"/>
<dbReference type="eggNOG" id="COG0780">
    <property type="taxonomic scope" value="Bacteria"/>
</dbReference>
<dbReference type="HOGENOM" id="CLU_102489_0_1_5"/>
<dbReference type="OrthoDB" id="9789995at2"/>
<dbReference type="PhylomeDB" id="Q8UD54"/>
<dbReference type="UniPathway" id="UPA00392"/>
<dbReference type="Proteomes" id="UP000000813">
    <property type="component" value="Chromosome circular"/>
</dbReference>
<dbReference type="GO" id="GO:0005737">
    <property type="term" value="C:cytoplasm"/>
    <property type="evidence" value="ECO:0007669"/>
    <property type="project" value="UniProtKB-SubCell"/>
</dbReference>
<dbReference type="GO" id="GO:0033739">
    <property type="term" value="F:preQ1 synthase activity"/>
    <property type="evidence" value="ECO:0007669"/>
    <property type="project" value="UniProtKB-UniRule"/>
</dbReference>
<dbReference type="GO" id="GO:0008616">
    <property type="term" value="P:queuosine biosynthetic process"/>
    <property type="evidence" value="ECO:0007669"/>
    <property type="project" value="UniProtKB-UniRule"/>
</dbReference>
<dbReference type="GO" id="GO:0006400">
    <property type="term" value="P:tRNA modification"/>
    <property type="evidence" value="ECO:0007669"/>
    <property type="project" value="UniProtKB-UniRule"/>
</dbReference>
<dbReference type="Gene3D" id="3.30.1130.10">
    <property type="match status" value="1"/>
</dbReference>
<dbReference type="HAMAP" id="MF_00818">
    <property type="entry name" value="QueF_type1"/>
    <property type="match status" value="1"/>
</dbReference>
<dbReference type="InterPro" id="IPR043133">
    <property type="entry name" value="GTP-CH-I_C/QueF"/>
</dbReference>
<dbReference type="InterPro" id="IPR050084">
    <property type="entry name" value="NADPH_dep_7-cyano-7-deazaG_red"/>
</dbReference>
<dbReference type="InterPro" id="IPR029500">
    <property type="entry name" value="QueF"/>
</dbReference>
<dbReference type="InterPro" id="IPR016856">
    <property type="entry name" value="QueF_type1"/>
</dbReference>
<dbReference type="NCBIfam" id="TIGR03139">
    <property type="entry name" value="QueF-II"/>
    <property type="match status" value="1"/>
</dbReference>
<dbReference type="PANTHER" id="PTHR34354">
    <property type="entry name" value="NADPH-DEPENDENT 7-CYANO-7-DEAZAGUANINE REDUCTASE"/>
    <property type="match status" value="1"/>
</dbReference>
<dbReference type="PANTHER" id="PTHR34354:SF1">
    <property type="entry name" value="NADPH-DEPENDENT 7-CYANO-7-DEAZAGUANINE REDUCTASE"/>
    <property type="match status" value="1"/>
</dbReference>
<dbReference type="Pfam" id="PF14489">
    <property type="entry name" value="QueF"/>
    <property type="match status" value="1"/>
</dbReference>
<dbReference type="SUPFAM" id="SSF55620">
    <property type="entry name" value="Tetrahydrobiopterin biosynthesis enzymes-like"/>
    <property type="match status" value="1"/>
</dbReference>
<feature type="chain" id="PRO_0000162947" description="NADPH-dependent 7-cyano-7-deazaguanine reductase">
    <location>
        <begin position="1"/>
        <end position="154"/>
    </location>
</feature>
<feature type="region of interest" description="Disordered" evidence="2">
    <location>
        <begin position="1"/>
        <end position="30"/>
    </location>
</feature>
<feature type="compositionally biased region" description="Polar residues" evidence="2">
    <location>
        <begin position="1"/>
        <end position="13"/>
    </location>
</feature>
<feature type="compositionally biased region" description="Basic and acidic residues" evidence="2">
    <location>
        <begin position="17"/>
        <end position="27"/>
    </location>
</feature>
<feature type="active site" description="Thioimide intermediate" evidence="1">
    <location>
        <position position="52"/>
    </location>
</feature>
<feature type="active site" description="Proton donor" evidence="1">
    <location>
        <position position="59"/>
    </location>
</feature>
<feature type="binding site" evidence="1">
    <location>
        <begin position="74"/>
        <end position="76"/>
    </location>
    <ligand>
        <name>substrate</name>
    </ligand>
</feature>
<feature type="binding site" evidence="1">
    <location>
        <begin position="93"/>
        <end position="94"/>
    </location>
    <ligand>
        <name>substrate</name>
    </ligand>
</feature>